<gene>
    <name evidence="1" type="primary">tyrS</name>
    <name type="ordered locus">BR0926</name>
    <name type="ordered locus">BS1330_I0922</name>
</gene>
<dbReference type="EC" id="6.1.1.1" evidence="1"/>
<dbReference type="EMBL" id="AE014291">
    <property type="protein sequence ID" value="AAN29852.1"/>
    <property type="molecule type" value="Genomic_DNA"/>
</dbReference>
<dbReference type="EMBL" id="CP002997">
    <property type="protein sequence ID" value="AEM18269.1"/>
    <property type="molecule type" value="Genomic_DNA"/>
</dbReference>
<dbReference type="RefSeq" id="WP_004689653.1">
    <property type="nucleotide sequence ID" value="NZ_KN046804.1"/>
</dbReference>
<dbReference type="SMR" id="Q8G105"/>
<dbReference type="GeneID" id="55590626"/>
<dbReference type="KEGG" id="bms:BR0926"/>
<dbReference type="KEGG" id="bsi:BS1330_I0922"/>
<dbReference type="PATRIC" id="fig|204722.22.peg.837"/>
<dbReference type="HOGENOM" id="CLU_024003_0_3_5"/>
<dbReference type="PhylomeDB" id="Q8G105"/>
<dbReference type="Proteomes" id="UP000007104">
    <property type="component" value="Chromosome I"/>
</dbReference>
<dbReference type="GO" id="GO:0005829">
    <property type="term" value="C:cytosol"/>
    <property type="evidence" value="ECO:0007669"/>
    <property type="project" value="TreeGrafter"/>
</dbReference>
<dbReference type="GO" id="GO:0005524">
    <property type="term" value="F:ATP binding"/>
    <property type="evidence" value="ECO:0007669"/>
    <property type="project" value="UniProtKB-UniRule"/>
</dbReference>
<dbReference type="GO" id="GO:0003723">
    <property type="term" value="F:RNA binding"/>
    <property type="evidence" value="ECO:0007669"/>
    <property type="project" value="UniProtKB-KW"/>
</dbReference>
<dbReference type="GO" id="GO:0004831">
    <property type="term" value="F:tyrosine-tRNA ligase activity"/>
    <property type="evidence" value="ECO:0007669"/>
    <property type="project" value="UniProtKB-UniRule"/>
</dbReference>
<dbReference type="GO" id="GO:0006437">
    <property type="term" value="P:tyrosyl-tRNA aminoacylation"/>
    <property type="evidence" value="ECO:0007669"/>
    <property type="project" value="UniProtKB-UniRule"/>
</dbReference>
<dbReference type="CDD" id="cd00165">
    <property type="entry name" value="S4"/>
    <property type="match status" value="1"/>
</dbReference>
<dbReference type="CDD" id="cd00805">
    <property type="entry name" value="TyrRS_core"/>
    <property type="match status" value="1"/>
</dbReference>
<dbReference type="FunFam" id="1.10.240.10:FF:000001">
    <property type="entry name" value="Tyrosine--tRNA ligase"/>
    <property type="match status" value="1"/>
</dbReference>
<dbReference type="FunFam" id="3.40.50.620:FF:000008">
    <property type="entry name" value="Tyrosine--tRNA ligase"/>
    <property type="match status" value="1"/>
</dbReference>
<dbReference type="Gene3D" id="3.40.50.620">
    <property type="entry name" value="HUPs"/>
    <property type="match status" value="1"/>
</dbReference>
<dbReference type="Gene3D" id="3.10.290.10">
    <property type="entry name" value="RNA-binding S4 domain"/>
    <property type="match status" value="1"/>
</dbReference>
<dbReference type="Gene3D" id="1.10.240.10">
    <property type="entry name" value="Tyrosyl-Transfer RNA Synthetase"/>
    <property type="match status" value="1"/>
</dbReference>
<dbReference type="HAMAP" id="MF_02006">
    <property type="entry name" value="Tyr_tRNA_synth_type1"/>
    <property type="match status" value="1"/>
</dbReference>
<dbReference type="InterPro" id="IPR001412">
    <property type="entry name" value="aa-tRNA-synth_I_CS"/>
</dbReference>
<dbReference type="InterPro" id="IPR002305">
    <property type="entry name" value="aa-tRNA-synth_Ic"/>
</dbReference>
<dbReference type="InterPro" id="IPR014729">
    <property type="entry name" value="Rossmann-like_a/b/a_fold"/>
</dbReference>
<dbReference type="InterPro" id="IPR036986">
    <property type="entry name" value="S4_RNA-bd_sf"/>
</dbReference>
<dbReference type="InterPro" id="IPR054608">
    <property type="entry name" value="SYY-like_C"/>
</dbReference>
<dbReference type="InterPro" id="IPR002307">
    <property type="entry name" value="Tyr-tRNA-ligase"/>
</dbReference>
<dbReference type="InterPro" id="IPR024088">
    <property type="entry name" value="Tyr-tRNA-ligase_bac-type"/>
</dbReference>
<dbReference type="InterPro" id="IPR024107">
    <property type="entry name" value="Tyr-tRNA-ligase_bac_1"/>
</dbReference>
<dbReference type="NCBIfam" id="TIGR00234">
    <property type="entry name" value="tyrS"/>
    <property type="match status" value="1"/>
</dbReference>
<dbReference type="PANTHER" id="PTHR11766:SF0">
    <property type="entry name" value="TYROSINE--TRNA LIGASE, MITOCHONDRIAL"/>
    <property type="match status" value="1"/>
</dbReference>
<dbReference type="PANTHER" id="PTHR11766">
    <property type="entry name" value="TYROSYL-TRNA SYNTHETASE"/>
    <property type="match status" value="1"/>
</dbReference>
<dbReference type="Pfam" id="PF22421">
    <property type="entry name" value="SYY_C-terminal"/>
    <property type="match status" value="1"/>
</dbReference>
<dbReference type="Pfam" id="PF00579">
    <property type="entry name" value="tRNA-synt_1b"/>
    <property type="match status" value="1"/>
</dbReference>
<dbReference type="PRINTS" id="PR01040">
    <property type="entry name" value="TRNASYNTHTYR"/>
</dbReference>
<dbReference type="SUPFAM" id="SSF55174">
    <property type="entry name" value="Alpha-L RNA-binding motif"/>
    <property type="match status" value="1"/>
</dbReference>
<dbReference type="SUPFAM" id="SSF52374">
    <property type="entry name" value="Nucleotidylyl transferase"/>
    <property type="match status" value="1"/>
</dbReference>
<dbReference type="PROSITE" id="PS00178">
    <property type="entry name" value="AA_TRNA_LIGASE_I"/>
    <property type="match status" value="1"/>
</dbReference>
<dbReference type="PROSITE" id="PS50889">
    <property type="entry name" value="S4"/>
    <property type="match status" value="1"/>
</dbReference>
<comment type="function">
    <text evidence="1">Catalyzes the attachment of tyrosine to tRNA(Tyr) in a two-step reaction: tyrosine is first activated by ATP to form Tyr-AMP and then transferred to the acceptor end of tRNA(Tyr).</text>
</comment>
<comment type="catalytic activity">
    <reaction evidence="1">
        <text>tRNA(Tyr) + L-tyrosine + ATP = L-tyrosyl-tRNA(Tyr) + AMP + diphosphate + H(+)</text>
        <dbReference type="Rhea" id="RHEA:10220"/>
        <dbReference type="Rhea" id="RHEA-COMP:9706"/>
        <dbReference type="Rhea" id="RHEA-COMP:9707"/>
        <dbReference type="ChEBI" id="CHEBI:15378"/>
        <dbReference type="ChEBI" id="CHEBI:30616"/>
        <dbReference type="ChEBI" id="CHEBI:33019"/>
        <dbReference type="ChEBI" id="CHEBI:58315"/>
        <dbReference type="ChEBI" id="CHEBI:78442"/>
        <dbReference type="ChEBI" id="CHEBI:78536"/>
        <dbReference type="ChEBI" id="CHEBI:456215"/>
        <dbReference type="EC" id="6.1.1.1"/>
    </reaction>
</comment>
<comment type="subunit">
    <text evidence="1">Homodimer.</text>
</comment>
<comment type="subcellular location">
    <subcellularLocation>
        <location evidence="1">Cytoplasm</location>
    </subcellularLocation>
</comment>
<comment type="similarity">
    <text evidence="1">Belongs to the class-I aminoacyl-tRNA synthetase family. TyrS type 1 subfamily.</text>
</comment>
<accession>Q8G105</accession>
<accession>G0K9F2</accession>
<proteinExistence type="inferred from homology"/>
<reference key="1">
    <citation type="journal article" date="2002" name="Proc. Natl. Acad. Sci. U.S.A.">
        <title>The Brucella suis genome reveals fundamental similarities between animal and plant pathogens and symbionts.</title>
        <authorList>
            <person name="Paulsen I.T."/>
            <person name="Seshadri R."/>
            <person name="Nelson K.E."/>
            <person name="Eisen J.A."/>
            <person name="Heidelberg J.F."/>
            <person name="Read T.D."/>
            <person name="Dodson R.J."/>
            <person name="Umayam L.A."/>
            <person name="Brinkac L.M."/>
            <person name="Beanan M.J."/>
            <person name="Daugherty S.C."/>
            <person name="DeBoy R.T."/>
            <person name="Durkin A.S."/>
            <person name="Kolonay J.F."/>
            <person name="Madupu R."/>
            <person name="Nelson W.C."/>
            <person name="Ayodeji B."/>
            <person name="Kraul M."/>
            <person name="Shetty J."/>
            <person name="Malek J.A."/>
            <person name="Van Aken S.E."/>
            <person name="Riedmuller S."/>
            <person name="Tettelin H."/>
            <person name="Gill S.R."/>
            <person name="White O."/>
            <person name="Salzberg S.L."/>
            <person name="Hoover D.L."/>
            <person name="Lindler L.E."/>
            <person name="Halling S.M."/>
            <person name="Boyle S.M."/>
            <person name="Fraser C.M."/>
        </authorList>
    </citation>
    <scope>NUCLEOTIDE SEQUENCE [LARGE SCALE GENOMIC DNA]</scope>
    <source>
        <strain>1330</strain>
    </source>
</reference>
<reference key="2">
    <citation type="journal article" date="2011" name="J. Bacteriol.">
        <title>Revised genome sequence of Brucella suis 1330.</title>
        <authorList>
            <person name="Tae H."/>
            <person name="Shallom S."/>
            <person name="Settlage R."/>
            <person name="Preston D."/>
            <person name="Adams L.G."/>
            <person name="Garner H.R."/>
        </authorList>
    </citation>
    <scope>NUCLEOTIDE SEQUENCE [LARGE SCALE GENOMIC DNA]</scope>
    <source>
        <strain>1330</strain>
    </source>
</reference>
<sequence>MSGFKSDFLRTLSERGFIHQISDESGLDELLAKETVTAYIGFDPTAPSLHAGGLIQIMMLYWLQQTGHKPVALMGGGTGMVGDPSFKDEARKLMTEDTIAENMASIKRVFANYLTFGDGANDALMVNNGEWLRNINYLEFLRDVGRHFSVNRMLSFDSVKLRLDREQSLSFLEFNYMILQAYDFVELNKRYGLRLQMGGSDQWGNIVNGIDLGHRMGTPQLYALTSPLLTTASGQKMGKSLGGAIWLNADMLSAYDFWQYWRNTEDADVERFLKLYTTLPLDEIARLAELGGAEINEAKKILATEVTAMLHGRDAAEEAAETARKTFEDGELSENLPTVGVHKATLNDGIGVLALMVLAELCTTNGEARRHVEGGAVRINDEPVSDPRMVVNAAALNGQGLIKLSLGKKRHVLIRPA</sequence>
<evidence type="ECO:0000255" key="1">
    <source>
        <dbReference type="HAMAP-Rule" id="MF_02006"/>
    </source>
</evidence>
<name>SYY_BRUSU</name>
<organism>
    <name type="scientific">Brucella suis biovar 1 (strain 1330)</name>
    <dbReference type="NCBI Taxonomy" id="204722"/>
    <lineage>
        <taxon>Bacteria</taxon>
        <taxon>Pseudomonadati</taxon>
        <taxon>Pseudomonadota</taxon>
        <taxon>Alphaproteobacteria</taxon>
        <taxon>Hyphomicrobiales</taxon>
        <taxon>Brucellaceae</taxon>
        <taxon>Brucella/Ochrobactrum group</taxon>
        <taxon>Brucella</taxon>
    </lineage>
</organism>
<protein>
    <recommendedName>
        <fullName evidence="1">Tyrosine--tRNA ligase</fullName>
        <ecNumber evidence="1">6.1.1.1</ecNumber>
    </recommendedName>
    <alternativeName>
        <fullName evidence="1">Tyrosyl-tRNA synthetase</fullName>
        <shortName evidence="1">TyrRS</shortName>
    </alternativeName>
</protein>
<keyword id="KW-0030">Aminoacyl-tRNA synthetase</keyword>
<keyword id="KW-0067">ATP-binding</keyword>
<keyword id="KW-0963">Cytoplasm</keyword>
<keyword id="KW-0436">Ligase</keyword>
<keyword id="KW-0547">Nucleotide-binding</keyword>
<keyword id="KW-0648">Protein biosynthesis</keyword>
<keyword id="KW-0694">RNA-binding</keyword>
<feature type="chain" id="PRO_0000234691" description="Tyrosine--tRNA ligase">
    <location>
        <begin position="1"/>
        <end position="417"/>
    </location>
</feature>
<feature type="domain" description="S4 RNA-binding" evidence="1">
    <location>
        <begin position="350"/>
        <end position="417"/>
    </location>
</feature>
<feature type="short sequence motif" description="'HIGH' region">
    <location>
        <begin position="44"/>
        <end position="53"/>
    </location>
</feature>
<feature type="short sequence motif" description="'KMSKS' region">
    <location>
        <begin position="236"/>
        <end position="240"/>
    </location>
</feature>
<feature type="binding site" evidence="1">
    <location>
        <position position="39"/>
    </location>
    <ligand>
        <name>L-tyrosine</name>
        <dbReference type="ChEBI" id="CHEBI:58315"/>
    </ligand>
</feature>
<feature type="binding site" evidence="1">
    <location>
        <position position="176"/>
    </location>
    <ligand>
        <name>L-tyrosine</name>
        <dbReference type="ChEBI" id="CHEBI:58315"/>
    </ligand>
</feature>
<feature type="binding site" evidence="1">
    <location>
        <position position="180"/>
    </location>
    <ligand>
        <name>L-tyrosine</name>
        <dbReference type="ChEBI" id="CHEBI:58315"/>
    </ligand>
</feature>
<feature type="binding site" evidence="1">
    <location>
        <position position="239"/>
    </location>
    <ligand>
        <name>ATP</name>
        <dbReference type="ChEBI" id="CHEBI:30616"/>
    </ligand>
</feature>